<proteinExistence type="inferred from homology"/>
<name>RS18_SINMW</name>
<organism>
    <name type="scientific">Sinorhizobium medicae (strain WSM419)</name>
    <name type="common">Ensifer medicae</name>
    <dbReference type="NCBI Taxonomy" id="366394"/>
    <lineage>
        <taxon>Bacteria</taxon>
        <taxon>Pseudomonadati</taxon>
        <taxon>Pseudomonadota</taxon>
        <taxon>Alphaproteobacteria</taxon>
        <taxon>Hyphomicrobiales</taxon>
        <taxon>Rhizobiaceae</taxon>
        <taxon>Sinorhizobium/Ensifer group</taxon>
        <taxon>Sinorhizobium</taxon>
    </lineage>
</organism>
<sequence length="82" mass="9451">MAEVSSAPVRRPFHRRRKTCPFSGANAPRIDYKDVRLLQRYISERGKIVPSRITAVSQKKQRELAQAIKRARFLGLLPYIVS</sequence>
<dbReference type="EMBL" id="CP000738">
    <property type="protein sequence ID" value="ABR59596.1"/>
    <property type="molecule type" value="Genomic_DNA"/>
</dbReference>
<dbReference type="RefSeq" id="WP_003531693.1">
    <property type="nucleotide sequence ID" value="NC_009636.1"/>
</dbReference>
<dbReference type="RefSeq" id="YP_001326431.1">
    <property type="nucleotide sequence ID" value="NC_009636.1"/>
</dbReference>
<dbReference type="SMR" id="A6U7G6"/>
<dbReference type="STRING" id="366394.Smed_0740"/>
<dbReference type="GeneID" id="89575460"/>
<dbReference type="KEGG" id="smd:Smed_0740"/>
<dbReference type="PATRIC" id="fig|366394.8.peg.3846"/>
<dbReference type="eggNOG" id="COG0238">
    <property type="taxonomic scope" value="Bacteria"/>
</dbReference>
<dbReference type="HOGENOM" id="CLU_148710_2_2_5"/>
<dbReference type="OrthoDB" id="9812008at2"/>
<dbReference type="Proteomes" id="UP000001108">
    <property type="component" value="Chromosome"/>
</dbReference>
<dbReference type="GO" id="GO:0022627">
    <property type="term" value="C:cytosolic small ribosomal subunit"/>
    <property type="evidence" value="ECO:0007669"/>
    <property type="project" value="TreeGrafter"/>
</dbReference>
<dbReference type="GO" id="GO:0070181">
    <property type="term" value="F:small ribosomal subunit rRNA binding"/>
    <property type="evidence" value="ECO:0007669"/>
    <property type="project" value="TreeGrafter"/>
</dbReference>
<dbReference type="GO" id="GO:0003735">
    <property type="term" value="F:structural constituent of ribosome"/>
    <property type="evidence" value="ECO:0007669"/>
    <property type="project" value="InterPro"/>
</dbReference>
<dbReference type="GO" id="GO:0006412">
    <property type="term" value="P:translation"/>
    <property type="evidence" value="ECO:0007669"/>
    <property type="project" value="UniProtKB-UniRule"/>
</dbReference>
<dbReference type="Gene3D" id="4.10.640.10">
    <property type="entry name" value="Ribosomal protein S18"/>
    <property type="match status" value="1"/>
</dbReference>
<dbReference type="HAMAP" id="MF_00270">
    <property type="entry name" value="Ribosomal_bS18"/>
    <property type="match status" value="1"/>
</dbReference>
<dbReference type="InterPro" id="IPR001648">
    <property type="entry name" value="Ribosomal_bS18"/>
</dbReference>
<dbReference type="InterPro" id="IPR018275">
    <property type="entry name" value="Ribosomal_bS18_CS"/>
</dbReference>
<dbReference type="InterPro" id="IPR036870">
    <property type="entry name" value="Ribosomal_bS18_sf"/>
</dbReference>
<dbReference type="NCBIfam" id="TIGR00165">
    <property type="entry name" value="S18"/>
    <property type="match status" value="1"/>
</dbReference>
<dbReference type="PANTHER" id="PTHR13479">
    <property type="entry name" value="30S RIBOSOMAL PROTEIN S18"/>
    <property type="match status" value="1"/>
</dbReference>
<dbReference type="PANTHER" id="PTHR13479:SF40">
    <property type="entry name" value="SMALL RIBOSOMAL SUBUNIT PROTEIN BS18M"/>
    <property type="match status" value="1"/>
</dbReference>
<dbReference type="Pfam" id="PF01084">
    <property type="entry name" value="Ribosomal_S18"/>
    <property type="match status" value="1"/>
</dbReference>
<dbReference type="PRINTS" id="PR00974">
    <property type="entry name" value="RIBOSOMALS18"/>
</dbReference>
<dbReference type="SUPFAM" id="SSF46911">
    <property type="entry name" value="Ribosomal protein S18"/>
    <property type="match status" value="1"/>
</dbReference>
<dbReference type="PROSITE" id="PS00057">
    <property type="entry name" value="RIBOSOMAL_S18"/>
    <property type="match status" value="1"/>
</dbReference>
<reference key="1">
    <citation type="submission" date="2007-06" db="EMBL/GenBank/DDBJ databases">
        <title>Complete sequence of Sinorhizobium medicae WSM419 chromosome.</title>
        <authorList>
            <consortium name="US DOE Joint Genome Institute"/>
            <person name="Copeland A."/>
            <person name="Lucas S."/>
            <person name="Lapidus A."/>
            <person name="Barry K."/>
            <person name="Glavina del Rio T."/>
            <person name="Dalin E."/>
            <person name="Tice H."/>
            <person name="Pitluck S."/>
            <person name="Chain P."/>
            <person name="Malfatti S."/>
            <person name="Shin M."/>
            <person name="Vergez L."/>
            <person name="Schmutz J."/>
            <person name="Larimer F."/>
            <person name="Land M."/>
            <person name="Hauser L."/>
            <person name="Kyrpides N."/>
            <person name="Mikhailova N."/>
            <person name="Reeve W.G."/>
            <person name="Richardson P."/>
        </authorList>
    </citation>
    <scope>NUCLEOTIDE SEQUENCE [LARGE SCALE GENOMIC DNA]</scope>
    <source>
        <strain>WSM419</strain>
    </source>
</reference>
<comment type="function">
    <text evidence="1">Binds as a heterodimer with protein bS6 to the central domain of the 16S rRNA, where it helps stabilize the platform of the 30S subunit.</text>
</comment>
<comment type="subunit">
    <text evidence="1">Part of the 30S ribosomal subunit. Forms a tight heterodimer with protein bS6.</text>
</comment>
<comment type="similarity">
    <text evidence="1">Belongs to the bacterial ribosomal protein bS18 family.</text>
</comment>
<keyword id="KW-0687">Ribonucleoprotein</keyword>
<keyword id="KW-0689">Ribosomal protein</keyword>
<keyword id="KW-0694">RNA-binding</keyword>
<keyword id="KW-0699">rRNA-binding</keyword>
<protein>
    <recommendedName>
        <fullName evidence="1">Small ribosomal subunit protein bS18</fullName>
    </recommendedName>
    <alternativeName>
        <fullName evidence="2">30S ribosomal protein S18</fullName>
    </alternativeName>
</protein>
<feature type="chain" id="PRO_1000003616" description="Small ribosomal subunit protein bS18">
    <location>
        <begin position="1"/>
        <end position="82"/>
    </location>
</feature>
<gene>
    <name evidence="1" type="primary">rpsR</name>
    <name type="ordered locus">Smed_0740</name>
</gene>
<accession>A6U7G6</accession>
<evidence type="ECO:0000255" key="1">
    <source>
        <dbReference type="HAMAP-Rule" id="MF_00270"/>
    </source>
</evidence>
<evidence type="ECO:0000305" key="2"/>